<reference key="1">
    <citation type="journal article" date="2003" name="Nature">
        <title>The genome sequence of Bacillus anthracis Ames and comparison to closely related bacteria.</title>
        <authorList>
            <person name="Read T.D."/>
            <person name="Peterson S.N."/>
            <person name="Tourasse N.J."/>
            <person name="Baillie L.W."/>
            <person name="Paulsen I.T."/>
            <person name="Nelson K.E."/>
            <person name="Tettelin H."/>
            <person name="Fouts D.E."/>
            <person name="Eisen J.A."/>
            <person name="Gill S.R."/>
            <person name="Holtzapple E.K."/>
            <person name="Okstad O.A."/>
            <person name="Helgason E."/>
            <person name="Rilstone J."/>
            <person name="Wu M."/>
            <person name="Kolonay J.F."/>
            <person name="Beanan M.J."/>
            <person name="Dodson R.J."/>
            <person name="Brinkac L.M."/>
            <person name="Gwinn M.L."/>
            <person name="DeBoy R.T."/>
            <person name="Madpu R."/>
            <person name="Daugherty S.C."/>
            <person name="Durkin A.S."/>
            <person name="Haft D.H."/>
            <person name="Nelson W.C."/>
            <person name="Peterson J.D."/>
            <person name="Pop M."/>
            <person name="Khouri H.M."/>
            <person name="Radune D."/>
            <person name="Benton J.L."/>
            <person name="Mahamoud Y."/>
            <person name="Jiang L."/>
            <person name="Hance I.R."/>
            <person name="Weidman J.F."/>
            <person name="Berry K.J."/>
            <person name="Plaut R.D."/>
            <person name="Wolf A.M."/>
            <person name="Watkins K.L."/>
            <person name="Nierman W.C."/>
            <person name="Hazen A."/>
            <person name="Cline R.T."/>
            <person name="Redmond C."/>
            <person name="Thwaite J.E."/>
            <person name="White O."/>
            <person name="Salzberg S.L."/>
            <person name="Thomason B."/>
            <person name="Friedlander A.M."/>
            <person name="Koehler T.M."/>
            <person name="Hanna P.C."/>
            <person name="Kolstoe A.-B."/>
            <person name="Fraser C.M."/>
        </authorList>
    </citation>
    <scope>NUCLEOTIDE SEQUENCE [LARGE SCALE GENOMIC DNA]</scope>
    <source>
        <strain>Ames / isolate Porton</strain>
    </source>
</reference>
<reference key="2">
    <citation type="journal article" date="2009" name="J. Bacteriol.">
        <title>The complete genome sequence of Bacillus anthracis Ames 'Ancestor'.</title>
        <authorList>
            <person name="Ravel J."/>
            <person name="Jiang L."/>
            <person name="Stanley S.T."/>
            <person name="Wilson M.R."/>
            <person name="Decker R.S."/>
            <person name="Read T.D."/>
            <person name="Worsham P."/>
            <person name="Keim P.S."/>
            <person name="Salzberg S.L."/>
            <person name="Fraser-Liggett C.M."/>
            <person name="Rasko D.A."/>
        </authorList>
    </citation>
    <scope>NUCLEOTIDE SEQUENCE [LARGE SCALE GENOMIC DNA]</scope>
    <source>
        <strain>Ames ancestor</strain>
    </source>
</reference>
<reference key="3">
    <citation type="submission" date="2004-01" db="EMBL/GenBank/DDBJ databases">
        <title>Complete genome sequence of Bacillus anthracis Sterne.</title>
        <authorList>
            <person name="Brettin T.S."/>
            <person name="Bruce D."/>
            <person name="Challacombe J.F."/>
            <person name="Gilna P."/>
            <person name="Han C."/>
            <person name="Hill K."/>
            <person name="Hitchcock P."/>
            <person name="Jackson P."/>
            <person name="Keim P."/>
            <person name="Longmire J."/>
            <person name="Lucas S."/>
            <person name="Okinaka R."/>
            <person name="Richardson P."/>
            <person name="Rubin E."/>
            <person name="Tice H."/>
        </authorList>
    </citation>
    <scope>NUCLEOTIDE SEQUENCE [LARGE SCALE GENOMIC DNA]</scope>
    <source>
        <strain>Sterne</strain>
    </source>
</reference>
<proteinExistence type="inferred from homology"/>
<sequence>MKQLTGAQIRQMFLDFFQEKGHAVEPSASLVPHEDPSLLWINSGVATLKKYFDGRVIPQNPRITNAQKSIRTNDIENVGKTARHHTFFEMLGNFSIGDYFKEEAITWAWEFLTSDKWIGFDKELLSVTIHPEDEEAFTIWNEKMGVPKERIIRLEENFWDIGEGPSGPNTEIFYDRGEAYGNDFSDPELYPGGENERYLEVWNLVFSQFNHNPDGSYTPLPKKNIDTGMGLERMTSIVQDVPTNFDTDLFMPMIGATETISGEKYRNGDLEKDMAFKVIADHIRTVTFAVGDGALPSNEGRGYVLRRLLRRAVRYSKKLNINRPFMFELVPVVGEVMKDFYPEVLEKKDFIAKVVKNEEERFHETLHDGEAILSEVIAKAKEEKTTVISGVDAFRLYDTYGFPIELTEEYAEEAGMTVDHEGFENEMEKQRERARAARQDVDSMQVQGGVLGEVKVASEFVGYGTVATESNVVALVKNGEYTDSLQVGEEGQLMLDVTPFYAESGGQIADRGCLLADGVKVLVKDVQKAPNGQNLHQVVVEEGTLTKDAAVKAIIDTKNRSSVVKNHTATHLLHQALKDVLGTHVNQAGSLVTSERLRFDFSHFGQVQADELEKIERIVNEKIWESIDVEISQKAIEEAKEMGAMALFGEKYGDVVRVVQVGDYSLELCGGCHVDNTASIGIFKIVAESGIGAGIRRIEAVTGKSAYELMNDQVGLLKEAAGKMKTNPKDILTRVDGLFAEVKQLQKENESLAAKLSNIEAGNLTDSVMTVDGVNVLAAKVNVADMNNLRTMMDDLKNKLESAVVVLASVNDDKVNILAGVTKDLISQGYHAGKLVKEVASRCGGGGGGRPDMAQAGGKNPAQVEEALAFVQEYVKSVSK</sequence>
<name>SYA_BACAN</name>
<keyword id="KW-0030">Aminoacyl-tRNA synthetase</keyword>
<keyword id="KW-0067">ATP-binding</keyword>
<keyword id="KW-0963">Cytoplasm</keyword>
<keyword id="KW-0436">Ligase</keyword>
<keyword id="KW-0479">Metal-binding</keyword>
<keyword id="KW-0547">Nucleotide-binding</keyword>
<keyword id="KW-0648">Protein biosynthesis</keyword>
<keyword id="KW-1185">Reference proteome</keyword>
<keyword id="KW-0694">RNA-binding</keyword>
<keyword id="KW-0820">tRNA-binding</keyword>
<keyword id="KW-0862">Zinc</keyword>
<organism>
    <name type="scientific">Bacillus anthracis</name>
    <dbReference type="NCBI Taxonomy" id="1392"/>
    <lineage>
        <taxon>Bacteria</taxon>
        <taxon>Bacillati</taxon>
        <taxon>Bacillota</taxon>
        <taxon>Bacilli</taxon>
        <taxon>Bacillales</taxon>
        <taxon>Bacillaceae</taxon>
        <taxon>Bacillus</taxon>
        <taxon>Bacillus cereus group</taxon>
    </lineage>
</organism>
<feature type="chain" id="PRO_0000075050" description="Alanine--tRNA ligase">
    <location>
        <begin position="1"/>
        <end position="880"/>
    </location>
</feature>
<feature type="binding site" evidence="1">
    <location>
        <position position="567"/>
    </location>
    <ligand>
        <name>Zn(2+)</name>
        <dbReference type="ChEBI" id="CHEBI:29105"/>
    </ligand>
</feature>
<feature type="binding site" evidence="1">
    <location>
        <position position="571"/>
    </location>
    <ligand>
        <name>Zn(2+)</name>
        <dbReference type="ChEBI" id="CHEBI:29105"/>
    </ligand>
</feature>
<feature type="binding site" evidence="1">
    <location>
        <position position="669"/>
    </location>
    <ligand>
        <name>Zn(2+)</name>
        <dbReference type="ChEBI" id="CHEBI:29105"/>
    </ligand>
</feature>
<feature type="binding site" evidence="1">
    <location>
        <position position="673"/>
    </location>
    <ligand>
        <name>Zn(2+)</name>
        <dbReference type="ChEBI" id="CHEBI:29105"/>
    </ligand>
</feature>
<dbReference type="EC" id="6.1.1.7" evidence="1"/>
<dbReference type="EMBL" id="AE016879">
    <property type="protein sequence ID" value="AAP28321.1"/>
    <property type="molecule type" value="Genomic_DNA"/>
</dbReference>
<dbReference type="EMBL" id="AE017334">
    <property type="protein sequence ID" value="AAT33739.1"/>
    <property type="molecule type" value="Genomic_DNA"/>
</dbReference>
<dbReference type="EMBL" id="AE017225">
    <property type="protein sequence ID" value="AAT56583.1"/>
    <property type="molecule type" value="Genomic_DNA"/>
</dbReference>
<dbReference type="RefSeq" id="NP_846835.1">
    <property type="nucleotide sequence ID" value="NC_003997.3"/>
</dbReference>
<dbReference type="RefSeq" id="WP_000811843.1">
    <property type="nucleotide sequence ID" value="NZ_WXXJ01000027.1"/>
</dbReference>
<dbReference type="RefSeq" id="YP_030532.1">
    <property type="nucleotide sequence ID" value="NC_005945.1"/>
</dbReference>
<dbReference type="SMR" id="Q81LK0"/>
<dbReference type="IntAct" id="Q81LK0">
    <property type="interactions" value="5"/>
</dbReference>
<dbReference type="STRING" id="261594.GBAA_4616"/>
<dbReference type="DNASU" id="1088737"/>
<dbReference type="GeneID" id="45024261"/>
<dbReference type="KEGG" id="ban:BA_4616"/>
<dbReference type="KEGG" id="banh:HYU01_22515"/>
<dbReference type="KEGG" id="bar:GBAA_4616"/>
<dbReference type="KEGG" id="bat:BAS4284"/>
<dbReference type="PATRIC" id="fig|198094.11.peg.4583"/>
<dbReference type="eggNOG" id="COG0013">
    <property type="taxonomic scope" value="Bacteria"/>
</dbReference>
<dbReference type="HOGENOM" id="CLU_004485_1_1_9"/>
<dbReference type="OMA" id="NKKDNFW"/>
<dbReference type="OrthoDB" id="9803884at2"/>
<dbReference type="Proteomes" id="UP000000427">
    <property type="component" value="Chromosome"/>
</dbReference>
<dbReference type="Proteomes" id="UP000000594">
    <property type="component" value="Chromosome"/>
</dbReference>
<dbReference type="GO" id="GO:0005829">
    <property type="term" value="C:cytosol"/>
    <property type="evidence" value="ECO:0007669"/>
    <property type="project" value="TreeGrafter"/>
</dbReference>
<dbReference type="GO" id="GO:0004813">
    <property type="term" value="F:alanine-tRNA ligase activity"/>
    <property type="evidence" value="ECO:0007669"/>
    <property type="project" value="UniProtKB-UniRule"/>
</dbReference>
<dbReference type="GO" id="GO:0002161">
    <property type="term" value="F:aminoacyl-tRNA deacylase activity"/>
    <property type="evidence" value="ECO:0007669"/>
    <property type="project" value="TreeGrafter"/>
</dbReference>
<dbReference type="GO" id="GO:0005524">
    <property type="term" value="F:ATP binding"/>
    <property type="evidence" value="ECO:0007669"/>
    <property type="project" value="UniProtKB-UniRule"/>
</dbReference>
<dbReference type="GO" id="GO:0140096">
    <property type="term" value="F:catalytic activity, acting on a protein"/>
    <property type="evidence" value="ECO:0007669"/>
    <property type="project" value="UniProtKB-ARBA"/>
</dbReference>
<dbReference type="GO" id="GO:0016740">
    <property type="term" value="F:transferase activity"/>
    <property type="evidence" value="ECO:0007669"/>
    <property type="project" value="UniProtKB-ARBA"/>
</dbReference>
<dbReference type="GO" id="GO:0000049">
    <property type="term" value="F:tRNA binding"/>
    <property type="evidence" value="ECO:0007669"/>
    <property type="project" value="UniProtKB-KW"/>
</dbReference>
<dbReference type="GO" id="GO:0008270">
    <property type="term" value="F:zinc ion binding"/>
    <property type="evidence" value="ECO:0007669"/>
    <property type="project" value="UniProtKB-UniRule"/>
</dbReference>
<dbReference type="GO" id="GO:0006419">
    <property type="term" value="P:alanyl-tRNA aminoacylation"/>
    <property type="evidence" value="ECO:0007669"/>
    <property type="project" value="UniProtKB-UniRule"/>
</dbReference>
<dbReference type="CDD" id="cd00673">
    <property type="entry name" value="AlaRS_core"/>
    <property type="match status" value="1"/>
</dbReference>
<dbReference type="FunFam" id="2.40.30.130:FF:000001">
    <property type="entry name" value="Alanine--tRNA ligase"/>
    <property type="match status" value="1"/>
</dbReference>
<dbReference type="FunFam" id="3.10.310.40:FF:000001">
    <property type="entry name" value="Alanine--tRNA ligase"/>
    <property type="match status" value="1"/>
</dbReference>
<dbReference type="FunFam" id="3.30.54.20:FF:000001">
    <property type="entry name" value="Alanine--tRNA ligase"/>
    <property type="match status" value="1"/>
</dbReference>
<dbReference type="FunFam" id="3.30.930.10:FF:000046">
    <property type="entry name" value="Alanine--tRNA ligase"/>
    <property type="match status" value="1"/>
</dbReference>
<dbReference type="FunFam" id="3.30.980.10:FF:000004">
    <property type="entry name" value="Alanine--tRNA ligase, cytoplasmic"/>
    <property type="match status" value="1"/>
</dbReference>
<dbReference type="Gene3D" id="2.40.30.130">
    <property type="match status" value="1"/>
</dbReference>
<dbReference type="Gene3D" id="3.10.310.40">
    <property type="match status" value="1"/>
</dbReference>
<dbReference type="Gene3D" id="3.30.54.20">
    <property type="match status" value="1"/>
</dbReference>
<dbReference type="Gene3D" id="6.10.250.550">
    <property type="match status" value="1"/>
</dbReference>
<dbReference type="Gene3D" id="3.30.930.10">
    <property type="entry name" value="Bira Bifunctional Protein, Domain 2"/>
    <property type="match status" value="1"/>
</dbReference>
<dbReference type="Gene3D" id="3.30.980.10">
    <property type="entry name" value="Threonyl-trna Synthetase, Chain A, domain 2"/>
    <property type="match status" value="1"/>
</dbReference>
<dbReference type="HAMAP" id="MF_00036_B">
    <property type="entry name" value="Ala_tRNA_synth_B"/>
    <property type="match status" value="1"/>
</dbReference>
<dbReference type="InterPro" id="IPR045864">
    <property type="entry name" value="aa-tRNA-synth_II/BPL/LPL"/>
</dbReference>
<dbReference type="InterPro" id="IPR002318">
    <property type="entry name" value="Ala-tRNA-lgiase_IIc"/>
</dbReference>
<dbReference type="InterPro" id="IPR018162">
    <property type="entry name" value="Ala-tRNA-ligase_IIc_anticod-bd"/>
</dbReference>
<dbReference type="InterPro" id="IPR018165">
    <property type="entry name" value="Ala-tRNA-synth_IIc_core"/>
</dbReference>
<dbReference type="InterPro" id="IPR018164">
    <property type="entry name" value="Ala-tRNA-synth_IIc_N"/>
</dbReference>
<dbReference type="InterPro" id="IPR050058">
    <property type="entry name" value="Ala-tRNA_ligase"/>
</dbReference>
<dbReference type="InterPro" id="IPR023033">
    <property type="entry name" value="Ala_tRNA_ligase_euk/bac"/>
</dbReference>
<dbReference type="InterPro" id="IPR003156">
    <property type="entry name" value="DHHA1_dom"/>
</dbReference>
<dbReference type="InterPro" id="IPR018163">
    <property type="entry name" value="Thr/Ala-tRNA-synth_IIc_edit"/>
</dbReference>
<dbReference type="InterPro" id="IPR009000">
    <property type="entry name" value="Transl_B-barrel_sf"/>
</dbReference>
<dbReference type="InterPro" id="IPR012947">
    <property type="entry name" value="tRNA_SAD"/>
</dbReference>
<dbReference type="NCBIfam" id="TIGR00344">
    <property type="entry name" value="alaS"/>
    <property type="match status" value="1"/>
</dbReference>
<dbReference type="PANTHER" id="PTHR11777:SF9">
    <property type="entry name" value="ALANINE--TRNA LIGASE, CYTOPLASMIC"/>
    <property type="match status" value="1"/>
</dbReference>
<dbReference type="PANTHER" id="PTHR11777">
    <property type="entry name" value="ALANYL-TRNA SYNTHETASE"/>
    <property type="match status" value="1"/>
</dbReference>
<dbReference type="Pfam" id="PF02272">
    <property type="entry name" value="DHHA1"/>
    <property type="match status" value="1"/>
</dbReference>
<dbReference type="Pfam" id="PF01411">
    <property type="entry name" value="tRNA-synt_2c"/>
    <property type="match status" value="1"/>
</dbReference>
<dbReference type="Pfam" id="PF07973">
    <property type="entry name" value="tRNA_SAD"/>
    <property type="match status" value="1"/>
</dbReference>
<dbReference type="PRINTS" id="PR00980">
    <property type="entry name" value="TRNASYNTHALA"/>
</dbReference>
<dbReference type="SMART" id="SM00863">
    <property type="entry name" value="tRNA_SAD"/>
    <property type="match status" value="1"/>
</dbReference>
<dbReference type="SUPFAM" id="SSF55681">
    <property type="entry name" value="Class II aaRS and biotin synthetases"/>
    <property type="match status" value="1"/>
</dbReference>
<dbReference type="SUPFAM" id="SSF101353">
    <property type="entry name" value="Putative anticodon-binding domain of alanyl-tRNA synthetase (AlaRS)"/>
    <property type="match status" value="1"/>
</dbReference>
<dbReference type="SUPFAM" id="SSF55186">
    <property type="entry name" value="ThrRS/AlaRS common domain"/>
    <property type="match status" value="1"/>
</dbReference>
<dbReference type="SUPFAM" id="SSF50447">
    <property type="entry name" value="Translation proteins"/>
    <property type="match status" value="1"/>
</dbReference>
<dbReference type="PROSITE" id="PS50860">
    <property type="entry name" value="AA_TRNA_LIGASE_II_ALA"/>
    <property type="match status" value="1"/>
</dbReference>
<protein>
    <recommendedName>
        <fullName evidence="1">Alanine--tRNA ligase</fullName>
        <ecNumber evidence="1">6.1.1.7</ecNumber>
    </recommendedName>
    <alternativeName>
        <fullName evidence="1">Alanyl-tRNA synthetase</fullName>
        <shortName evidence="1">AlaRS</shortName>
    </alternativeName>
</protein>
<evidence type="ECO:0000255" key="1">
    <source>
        <dbReference type="HAMAP-Rule" id="MF_00036"/>
    </source>
</evidence>
<accession>Q81LK0</accession>
<accession>Q6HT06</accession>
<accession>Q6KM96</accession>
<gene>
    <name evidence="1" type="primary">alaS</name>
    <name type="ordered locus">BA_4616</name>
    <name type="ordered locus">GBAA_4616</name>
    <name type="ordered locus">BAS4284</name>
</gene>
<comment type="function">
    <text evidence="1">Catalyzes the attachment of alanine to tRNA(Ala) in a two-step reaction: alanine is first activated by ATP to form Ala-AMP and then transferred to the acceptor end of tRNA(Ala). Also edits incorrectly charged Ser-tRNA(Ala) and Gly-tRNA(Ala) via its editing domain.</text>
</comment>
<comment type="catalytic activity">
    <reaction evidence="1">
        <text>tRNA(Ala) + L-alanine + ATP = L-alanyl-tRNA(Ala) + AMP + diphosphate</text>
        <dbReference type="Rhea" id="RHEA:12540"/>
        <dbReference type="Rhea" id="RHEA-COMP:9657"/>
        <dbReference type="Rhea" id="RHEA-COMP:9923"/>
        <dbReference type="ChEBI" id="CHEBI:30616"/>
        <dbReference type="ChEBI" id="CHEBI:33019"/>
        <dbReference type="ChEBI" id="CHEBI:57972"/>
        <dbReference type="ChEBI" id="CHEBI:78442"/>
        <dbReference type="ChEBI" id="CHEBI:78497"/>
        <dbReference type="ChEBI" id="CHEBI:456215"/>
        <dbReference type="EC" id="6.1.1.7"/>
    </reaction>
</comment>
<comment type="cofactor">
    <cofactor evidence="1">
        <name>Zn(2+)</name>
        <dbReference type="ChEBI" id="CHEBI:29105"/>
    </cofactor>
    <text evidence="1">Binds 1 zinc ion per subunit.</text>
</comment>
<comment type="subcellular location">
    <subcellularLocation>
        <location evidence="1">Cytoplasm</location>
    </subcellularLocation>
</comment>
<comment type="domain">
    <text evidence="1">Consists of three domains; the N-terminal catalytic domain, the editing domain and the C-terminal C-Ala domain. The editing domain removes incorrectly charged amino acids, while the C-Ala domain, along with tRNA(Ala), serves as a bridge to cooperatively bring together the editing and aminoacylation centers thus stimulating deacylation of misacylated tRNAs.</text>
</comment>
<comment type="similarity">
    <text evidence="1">Belongs to the class-II aminoacyl-tRNA synthetase family.</text>
</comment>